<accession>Q9JKF0</accession>
<keyword id="KW-0297">G-protein coupled receptor</keyword>
<keyword id="KW-0325">Glycoprotein</keyword>
<keyword id="KW-0472">Membrane</keyword>
<keyword id="KW-0675">Receptor</keyword>
<keyword id="KW-1185">Reference proteome</keyword>
<keyword id="KW-0716">Sensory transduction</keyword>
<keyword id="KW-0919">Taste</keyword>
<keyword id="KW-0807">Transducer</keyword>
<keyword id="KW-0812">Transmembrane</keyword>
<keyword id="KW-1133">Transmembrane helix</keyword>
<proteinExistence type="evidence at protein level"/>
<comment type="function">
    <text>Gustducin-coupled receptor implicated in the perception of bitter compounds in the oral cavity and the gastrointestinal tract. Signals through PLCB2 and the calcium-regulated cation channel TRPM5.</text>
</comment>
<comment type="subcellular location">
    <subcellularLocation>
        <location>Membrane</location>
        <topology>Multi-pass membrane protein</topology>
    </subcellularLocation>
</comment>
<comment type="tissue specificity">
    <text evidence="2">Expressed in subsets of taste receptor cells of the tongue and palate epithelium and exclusively in gustducin-positive cells. Expressed in the antrum and fundus (part of the stomach), duodenum and in gastric endocrine cells.</text>
</comment>
<comment type="miscellaneous">
    <text>Several bitter taste receptors are expressed in a single taste receptor cell.</text>
</comment>
<comment type="similarity">
    <text evidence="3">Belongs to the G-protein coupled receptor T2R family.</text>
</comment>
<evidence type="ECO:0000255" key="1"/>
<evidence type="ECO:0000269" key="2">
    <source>
    </source>
</evidence>
<evidence type="ECO:0000305" key="3"/>
<reference key="1">
    <citation type="journal article" date="2000" name="Cell">
        <title>A novel family of mammalian taste receptors.</title>
        <authorList>
            <person name="Adler E."/>
            <person name="Hoon M.A."/>
            <person name="Mueller K.L."/>
            <person name="Chandrashekar J."/>
            <person name="Ryba N.J.P."/>
            <person name="Zuker C.S."/>
        </authorList>
    </citation>
    <scope>NUCLEOTIDE SEQUENCE [MRNA]</scope>
    <scope>TOPOLOGY</scope>
</reference>
<reference key="2">
    <citation type="journal article" date="2000" name="Cell">
        <title>T2Rs function as bitter taste receptors.</title>
        <authorList>
            <person name="Chandrashekar J."/>
            <person name="Mueller K.L."/>
            <person name="Hoon M.A."/>
            <person name="Adler E."/>
            <person name="Feng L."/>
            <person name="Guo W."/>
            <person name="Zuker C.S."/>
            <person name="Ryba N.J.P."/>
        </authorList>
    </citation>
    <scope>CHARACTERIZATION</scope>
</reference>
<reference key="3">
    <citation type="journal article" date="2002" name="Proc. Natl. Acad. Sci. U.S.A.">
        <title>Expression of bitter taste receptors of the T2R family in the gastrointestinal tract and enteroendocrine STC-1 cells.</title>
        <authorList>
            <person name="Wu S.V."/>
            <person name="Rozengurt N."/>
            <person name="Yang M."/>
            <person name="Young S.H."/>
            <person name="Sinnett-Smith J."/>
            <person name="Rozengurt E."/>
        </authorList>
    </citation>
    <scope>TISSUE SPECIFICITY</scope>
</reference>
<reference key="4">
    <citation type="journal article" date="2002" name="Curr. Opin. Neurobiol.">
        <title>Receptors for bitter and sweet taste.</title>
        <authorList>
            <person name="Montmayeur J.-P."/>
            <person name="Matsunami H."/>
        </authorList>
    </citation>
    <scope>REVIEW</scope>
</reference>
<reference key="5">
    <citation type="journal article" date="2002" name="J. Biol. Chem.">
        <title>Molecular mechanisms of bitter and sweet taste transduction.</title>
        <authorList>
            <person name="Margolskee R.F."/>
        </authorList>
    </citation>
    <scope>REVIEW</scope>
</reference>
<reference key="6">
    <citation type="journal article" date="2003" name="Cell">
        <title>Coding of sweet, bitter, and umami tastes: different receptor cells sharing similar signaling pathways.</title>
        <authorList>
            <person name="Zhang Y."/>
            <person name="Hoon M.A."/>
            <person name="Chandrashekar J."/>
            <person name="Mueller K.L."/>
            <person name="Cook B."/>
            <person name="Wu D."/>
            <person name="Zuker C.S."/>
            <person name="Ryba N.J."/>
        </authorList>
    </citation>
    <scope>REVIEW</scope>
</reference>
<organism>
    <name type="scientific">Rattus norvegicus</name>
    <name type="common">Rat</name>
    <dbReference type="NCBI Taxonomy" id="10116"/>
    <lineage>
        <taxon>Eukaryota</taxon>
        <taxon>Metazoa</taxon>
        <taxon>Chordata</taxon>
        <taxon>Craniata</taxon>
        <taxon>Vertebrata</taxon>
        <taxon>Euteleostomi</taxon>
        <taxon>Mammalia</taxon>
        <taxon>Eutheria</taxon>
        <taxon>Euarchontoglires</taxon>
        <taxon>Glires</taxon>
        <taxon>Rodentia</taxon>
        <taxon>Myomorpha</taxon>
        <taxon>Muroidea</taxon>
        <taxon>Muridae</taxon>
        <taxon>Murinae</taxon>
        <taxon>Rattus</taxon>
    </lineage>
</organism>
<sequence>MFSQKTNYSHLFTFSIIFYVEIVTGILGNGFIALVNIMDWLKRRRISTADQILTALALTRLIYVWSVLICILLLFLCPHLSMRPEMFTAIGVIWVVDNHFSIWLATCLGVFYFLKIASFSNSLFLYLKWRVKKVVLMIILISLIFLMLNISSLGMYDHFSIDVYEGNMSYNLVDSTHFPRIFLFTNSSKVFLIANSSHVFLPINSLFMLIPFTVSLVAFFVLFLSLWKHHKKMQVNAKGPRDASTMAHTKALQIGFSFLLLYAIYLLFIITGILNLDLMRCIVILLFDHISGAVFSISHSFVLILGNSKLRQATLSVLPCLRCRSKDMDTVVF</sequence>
<feature type="chain" id="PRO_0000082195" description="Taste receptor type 2 member 123">
    <location>
        <begin position="1"/>
        <end position="333"/>
    </location>
</feature>
<feature type="topological domain" description="Extracellular" evidence="1">
    <location>
        <begin position="1"/>
        <end position="14"/>
    </location>
</feature>
<feature type="transmembrane region" description="Helical; Name=1" evidence="1">
    <location>
        <begin position="15"/>
        <end position="37"/>
    </location>
</feature>
<feature type="topological domain" description="Cytoplasmic" evidence="1">
    <location>
        <begin position="38"/>
        <end position="57"/>
    </location>
</feature>
<feature type="transmembrane region" description="Helical; Name=2" evidence="1">
    <location>
        <begin position="58"/>
        <end position="77"/>
    </location>
</feature>
<feature type="topological domain" description="Extracellular" evidence="1">
    <location>
        <begin position="78"/>
        <end position="91"/>
    </location>
</feature>
<feature type="transmembrane region" description="Helical; Name=3" evidence="1">
    <location>
        <begin position="92"/>
        <end position="114"/>
    </location>
</feature>
<feature type="topological domain" description="Cytoplasmic" evidence="1">
    <location>
        <begin position="115"/>
        <end position="133"/>
    </location>
</feature>
<feature type="transmembrane region" description="Helical; Name=4" evidence="1">
    <location>
        <begin position="134"/>
        <end position="156"/>
    </location>
</feature>
<feature type="topological domain" description="Extracellular" evidence="1">
    <location>
        <begin position="157"/>
        <end position="204"/>
    </location>
</feature>
<feature type="transmembrane region" description="Helical; Name=5" evidence="1">
    <location>
        <begin position="205"/>
        <end position="227"/>
    </location>
</feature>
<feature type="topological domain" description="Cytoplasmic" evidence="1">
    <location>
        <begin position="228"/>
        <end position="250"/>
    </location>
</feature>
<feature type="transmembrane region" description="Helical; Name=6" evidence="1">
    <location>
        <begin position="251"/>
        <end position="273"/>
    </location>
</feature>
<feature type="topological domain" description="Extracellular" evidence="1">
    <location>
        <begin position="274"/>
        <end position="282"/>
    </location>
</feature>
<feature type="transmembrane region" description="Helical; Name=7" evidence="1">
    <location>
        <begin position="283"/>
        <end position="305"/>
    </location>
</feature>
<feature type="topological domain" description="Cytoplasmic" evidence="1">
    <location>
        <begin position="306"/>
        <end position="333"/>
    </location>
</feature>
<feature type="glycosylation site" description="N-linked (GlcNAc...) asparagine" evidence="1">
    <location>
        <position position="167"/>
    </location>
</feature>
<feature type="glycosylation site" description="N-linked (GlcNAc...) asparagine" evidence="1">
    <location>
        <position position="186"/>
    </location>
</feature>
<feature type="glycosylation site" description="N-linked (GlcNAc...) asparagine" evidence="1">
    <location>
        <position position="195"/>
    </location>
</feature>
<dbReference type="EMBL" id="AF240765">
    <property type="protein sequence ID" value="AAF45303.1"/>
    <property type="molecule type" value="mRNA"/>
</dbReference>
<dbReference type="RefSeq" id="NP_775458.1">
    <property type="nucleotide sequence ID" value="NM_173336.1"/>
</dbReference>
<dbReference type="SMR" id="Q9JKF0"/>
<dbReference type="FunCoup" id="Q9JKF0">
    <property type="interactions" value="80"/>
</dbReference>
<dbReference type="STRING" id="10116.ENSRNOP00000041021"/>
<dbReference type="GlyCosmos" id="Q9JKF0">
    <property type="glycosylation" value="3 sites, No reported glycans"/>
</dbReference>
<dbReference type="GlyGen" id="Q9JKF0">
    <property type="glycosylation" value="3 sites"/>
</dbReference>
<dbReference type="PaxDb" id="10116-ENSRNOP00000041021"/>
<dbReference type="GeneID" id="287003"/>
<dbReference type="KEGG" id="rno:287003"/>
<dbReference type="UCSC" id="RGD:727880">
    <property type="organism name" value="rat"/>
</dbReference>
<dbReference type="AGR" id="RGD:727880"/>
<dbReference type="CTD" id="353167"/>
<dbReference type="RGD" id="727880">
    <property type="gene designation" value="Tas2r123"/>
</dbReference>
<dbReference type="eggNOG" id="ENOG502SKRK">
    <property type="taxonomic scope" value="Eukaryota"/>
</dbReference>
<dbReference type="InParanoid" id="Q9JKF0"/>
<dbReference type="OrthoDB" id="8876749at2759"/>
<dbReference type="PhylomeDB" id="Q9JKF0"/>
<dbReference type="PRO" id="PR:Q9JKF0"/>
<dbReference type="Proteomes" id="UP000002494">
    <property type="component" value="Unplaced"/>
</dbReference>
<dbReference type="GO" id="GO:0016020">
    <property type="term" value="C:membrane"/>
    <property type="evidence" value="ECO:0000318"/>
    <property type="project" value="GO_Central"/>
</dbReference>
<dbReference type="GO" id="GO:0033038">
    <property type="term" value="F:bitter taste receptor activity"/>
    <property type="evidence" value="ECO:0000318"/>
    <property type="project" value="GO_Central"/>
</dbReference>
<dbReference type="GO" id="GO:0004930">
    <property type="term" value="F:G protein-coupled receptor activity"/>
    <property type="evidence" value="ECO:0007669"/>
    <property type="project" value="UniProtKB-KW"/>
</dbReference>
<dbReference type="GO" id="GO:0008527">
    <property type="term" value="F:taste receptor activity"/>
    <property type="evidence" value="ECO:0000304"/>
    <property type="project" value="UniProtKB"/>
</dbReference>
<dbReference type="GO" id="GO:0001580">
    <property type="term" value="P:detection of chemical stimulus involved in sensory perception of bitter taste"/>
    <property type="evidence" value="ECO:0000318"/>
    <property type="project" value="GO_Central"/>
</dbReference>
<dbReference type="CDD" id="cd15019">
    <property type="entry name" value="7tm_TAS2R14-like"/>
    <property type="match status" value="1"/>
</dbReference>
<dbReference type="FunFam" id="1.20.1070.10:FF:000042">
    <property type="entry name" value="Taste receptor type 2 member 7"/>
    <property type="match status" value="1"/>
</dbReference>
<dbReference type="Gene3D" id="1.20.1070.10">
    <property type="entry name" value="Rhodopsin 7-helix transmembrane proteins"/>
    <property type="match status" value="1"/>
</dbReference>
<dbReference type="InterPro" id="IPR007960">
    <property type="entry name" value="TAS2R"/>
</dbReference>
<dbReference type="PANTHER" id="PTHR11394">
    <property type="entry name" value="TASTE RECEPTOR TYPE 2"/>
    <property type="match status" value="1"/>
</dbReference>
<dbReference type="PANTHER" id="PTHR11394:SF80">
    <property type="entry name" value="TASTE RECEPTOR TYPE 2 MEMBER 123"/>
    <property type="match status" value="1"/>
</dbReference>
<dbReference type="Pfam" id="PF05296">
    <property type="entry name" value="TAS2R"/>
    <property type="match status" value="1"/>
</dbReference>
<dbReference type="SUPFAM" id="SSF81321">
    <property type="entry name" value="Family A G protein-coupled receptor-like"/>
    <property type="match status" value="1"/>
</dbReference>
<gene>
    <name type="primary">Tas2r123</name>
    <name type="synonym">Tas2r14</name>
    <name type="synonym">Tas2r2</name>
    <name type="synonym">Tas2r23</name>
</gene>
<name>TR123_RAT</name>
<protein>
    <recommendedName>
        <fullName>Taste receptor type 2 member 123</fullName>
        <shortName>T2R123</shortName>
    </recommendedName>
    <alternativeName>
        <fullName>Taste receptor type 2 member 2</fullName>
        <shortName>T2R2</shortName>
    </alternativeName>
    <alternativeName>
        <fullName>Taste receptor type 2 member 23</fullName>
        <shortName>T2R23</shortName>
    </alternativeName>
</protein>